<gene>
    <name evidence="1" type="primary">efp</name>
    <name type="ordered locus">Nwi_1643</name>
</gene>
<reference key="1">
    <citation type="journal article" date="2006" name="Appl. Environ. Microbiol.">
        <title>Genome sequence of the chemolithoautotrophic nitrite-oxidizing bacterium Nitrobacter winogradskyi Nb-255.</title>
        <authorList>
            <person name="Starkenburg S.R."/>
            <person name="Chain P.S.G."/>
            <person name="Sayavedra-Soto L.A."/>
            <person name="Hauser L."/>
            <person name="Land M.L."/>
            <person name="Larimer F.W."/>
            <person name="Malfatti S.A."/>
            <person name="Klotz M.G."/>
            <person name="Bottomley P.J."/>
            <person name="Arp D.J."/>
            <person name="Hickey W.J."/>
        </authorList>
    </citation>
    <scope>NUCLEOTIDE SEQUENCE [LARGE SCALE GENOMIC DNA]</scope>
    <source>
        <strain>ATCC 25391 / DSM 10237 / CIP 104748 / NCIMB 11846 / Nb-255</strain>
    </source>
</reference>
<organism>
    <name type="scientific">Nitrobacter winogradskyi (strain ATCC 25391 / DSM 10237 / CIP 104748 / NCIMB 11846 / Nb-255)</name>
    <dbReference type="NCBI Taxonomy" id="323098"/>
    <lineage>
        <taxon>Bacteria</taxon>
        <taxon>Pseudomonadati</taxon>
        <taxon>Pseudomonadota</taxon>
        <taxon>Alphaproteobacteria</taxon>
        <taxon>Hyphomicrobiales</taxon>
        <taxon>Nitrobacteraceae</taxon>
        <taxon>Nitrobacter</taxon>
    </lineage>
</organism>
<dbReference type="EMBL" id="CP000115">
    <property type="protein sequence ID" value="ABA04904.1"/>
    <property type="molecule type" value="Genomic_DNA"/>
</dbReference>
<dbReference type="RefSeq" id="WP_011314903.1">
    <property type="nucleotide sequence ID" value="NC_007406.1"/>
</dbReference>
<dbReference type="SMR" id="Q3SS37"/>
<dbReference type="STRING" id="323098.Nwi_1643"/>
<dbReference type="KEGG" id="nwi:Nwi_1643"/>
<dbReference type="eggNOG" id="COG0231">
    <property type="taxonomic scope" value="Bacteria"/>
</dbReference>
<dbReference type="HOGENOM" id="CLU_074944_1_1_5"/>
<dbReference type="OrthoDB" id="9801844at2"/>
<dbReference type="UniPathway" id="UPA00345"/>
<dbReference type="Proteomes" id="UP000002531">
    <property type="component" value="Chromosome"/>
</dbReference>
<dbReference type="GO" id="GO:0005737">
    <property type="term" value="C:cytoplasm"/>
    <property type="evidence" value="ECO:0007669"/>
    <property type="project" value="UniProtKB-SubCell"/>
</dbReference>
<dbReference type="GO" id="GO:0003746">
    <property type="term" value="F:translation elongation factor activity"/>
    <property type="evidence" value="ECO:0007669"/>
    <property type="project" value="UniProtKB-UniRule"/>
</dbReference>
<dbReference type="GO" id="GO:0043043">
    <property type="term" value="P:peptide biosynthetic process"/>
    <property type="evidence" value="ECO:0007669"/>
    <property type="project" value="InterPro"/>
</dbReference>
<dbReference type="CDD" id="cd04470">
    <property type="entry name" value="S1_EF-P_repeat_1"/>
    <property type="match status" value="1"/>
</dbReference>
<dbReference type="CDD" id="cd05794">
    <property type="entry name" value="S1_EF-P_repeat_2"/>
    <property type="match status" value="1"/>
</dbReference>
<dbReference type="FunFam" id="2.40.50.140:FF:000004">
    <property type="entry name" value="Elongation factor P"/>
    <property type="match status" value="1"/>
</dbReference>
<dbReference type="FunFam" id="2.40.50.140:FF:000009">
    <property type="entry name" value="Elongation factor P"/>
    <property type="match status" value="1"/>
</dbReference>
<dbReference type="Gene3D" id="2.30.30.30">
    <property type="match status" value="1"/>
</dbReference>
<dbReference type="Gene3D" id="2.40.50.140">
    <property type="entry name" value="Nucleic acid-binding proteins"/>
    <property type="match status" value="2"/>
</dbReference>
<dbReference type="HAMAP" id="MF_00141">
    <property type="entry name" value="EF_P"/>
    <property type="match status" value="1"/>
</dbReference>
<dbReference type="InterPro" id="IPR015365">
    <property type="entry name" value="Elong-fact-P_C"/>
</dbReference>
<dbReference type="InterPro" id="IPR012340">
    <property type="entry name" value="NA-bd_OB-fold"/>
</dbReference>
<dbReference type="InterPro" id="IPR014722">
    <property type="entry name" value="Rib_uL2_dom2"/>
</dbReference>
<dbReference type="InterPro" id="IPR020599">
    <property type="entry name" value="Transl_elong_fac_P/YeiP"/>
</dbReference>
<dbReference type="InterPro" id="IPR013185">
    <property type="entry name" value="Transl_elong_KOW-like"/>
</dbReference>
<dbReference type="InterPro" id="IPR001059">
    <property type="entry name" value="Transl_elong_P/YeiP_cen"/>
</dbReference>
<dbReference type="InterPro" id="IPR013852">
    <property type="entry name" value="Transl_elong_P/YeiP_CS"/>
</dbReference>
<dbReference type="InterPro" id="IPR011768">
    <property type="entry name" value="Transl_elongation_fac_P"/>
</dbReference>
<dbReference type="InterPro" id="IPR008991">
    <property type="entry name" value="Translation_prot_SH3-like_sf"/>
</dbReference>
<dbReference type="NCBIfam" id="TIGR00038">
    <property type="entry name" value="efp"/>
    <property type="match status" value="1"/>
</dbReference>
<dbReference type="NCBIfam" id="NF001810">
    <property type="entry name" value="PRK00529.1"/>
    <property type="match status" value="1"/>
</dbReference>
<dbReference type="PANTHER" id="PTHR30053">
    <property type="entry name" value="ELONGATION FACTOR P"/>
    <property type="match status" value="1"/>
</dbReference>
<dbReference type="PANTHER" id="PTHR30053:SF14">
    <property type="entry name" value="TRANSLATION ELONGATION FACTOR KOW-LIKE DOMAIN-CONTAINING PROTEIN"/>
    <property type="match status" value="1"/>
</dbReference>
<dbReference type="Pfam" id="PF01132">
    <property type="entry name" value="EFP"/>
    <property type="match status" value="1"/>
</dbReference>
<dbReference type="Pfam" id="PF08207">
    <property type="entry name" value="EFP_N"/>
    <property type="match status" value="1"/>
</dbReference>
<dbReference type="Pfam" id="PF09285">
    <property type="entry name" value="Elong-fact-P_C"/>
    <property type="match status" value="1"/>
</dbReference>
<dbReference type="PIRSF" id="PIRSF005901">
    <property type="entry name" value="EF-P"/>
    <property type="match status" value="1"/>
</dbReference>
<dbReference type="SMART" id="SM01185">
    <property type="entry name" value="EFP"/>
    <property type="match status" value="1"/>
</dbReference>
<dbReference type="SMART" id="SM00841">
    <property type="entry name" value="Elong-fact-P_C"/>
    <property type="match status" value="1"/>
</dbReference>
<dbReference type="SUPFAM" id="SSF50249">
    <property type="entry name" value="Nucleic acid-binding proteins"/>
    <property type="match status" value="2"/>
</dbReference>
<dbReference type="SUPFAM" id="SSF50104">
    <property type="entry name" value="Translation proteins SH3-like domain"/>
    <property type="match status" value="1"/>
</dbReference>
<dbReference type="PROSITE" id="PS01275">
    <property type="entry name" value="EFP"/>
    <property type="match status" value="1"/>
</dbReference>
<name>EFP_NITWN</name>
<protein>
    <recommendedName>
        <fullName evidence="1">Elongation factor P</fullName>
        <shortName evidence="1">EF-P</shortName>
    </recommendedName>
</protein>
<evidence type="ECO:0000255" key="1">
    <source>
        <dbReference type="HAMAP-Rule" id="MF_00141"/>
    </source>
</evidence>
<proteinExistence type="inferred from homology"/>
<feature type="chain" id="PRO_1000010795" description="Elongation factor P">
    <location>
        <begin position="1"/>
        <end position="188"/>
    </location>
</feature>
<accession>Q3SS37</accession>
<keyword id="KW-0963">Cytoplasm</keyword>
<keyword id="KW-0251">Elongation factor</keyword>
<keyword id="KW-0648">Protein biosynthesis</keyword>
<keyword id="KW-1185">Reference proteome</keyword>
<comment type="function">
    <text evidence="1">Involved in peptide bond synthesis. Stimulates efficient translation and peptide-bond synthesis on native or reconstituted 70S ribosomes in vitro. Probably functions indirectly by altering the affinity of the ribosome for aminoacyl-tRNA, thus increasing their reactivity as acceptors for peptidyl transferase.</text>
</comment>
<comment type="pathway">
    <text evidence="1">Protein biosynthesis; polypeptide chain elongation.</text>
</comment>
<comment type="subcellular location">
    <subcellularLocation>
        <location evidence="1">Cytoplasm</location>
    </subcellularLocation>
</comment>
<comment type="similarity">
    <text evidence="1">Belongs to the elongation factor P family.</text>
</comment>
<sequence>MRVIASSIRKGNVIEQDGKLYVVLTAENIHPGKGTPVSQIEMRRISDGVKISERYKTTDQVERATIEDHNFTFLYEDGDGFHFMNAETYDQVQVPKDIVGSAAPYLQENMVVKLSLHDMVPVAITLPQRVTLEVVETEPVTKGQTASSSYKPAVLSNGVRTGVPPHVAVGTRVVVMTEDGSYVERAKD</sequence>